<feature type="chain" id="PRO_0000185229" description="UPF0166 protein aq_448">
    <location>
        <begin position="1"/>
        <end position="96"/>
    </location>
</feature>
<evidence type="ECO:0000305" key="1"/>
<accession>O66756</accession>
<gene>
    <name type="ordered locus">aq_448</name>
</gene>
<proteinExistence type="inferred from homology"/>
<keyword id="KW-1185">Reference proteome</keyword>
<organism>
    <name type="scientific">Aquifex aeolicus (strain VF5)</name>
    <dbReference type="NCBI Taxonomy" id="224324"/>
    <lineage>
        <taxon>Bacteria</taxon>
        <taxon>Pseudomonadati</taxon>
        <taxon>Aquificota</taxon>
        <taxon>Aquificia</taxon>
        <taxon>Aquificales</taxon>
        <taxon>Aquificaceae</taxon>
        <taxon>Aquifex</taxon>
    </lineage>
</organism>
<sequence length="96" mass="11320">MKEVLMRIYSSKEENLEDYINKLFEGGIRGAVVLQGIAGFGKGREFHSEEIEVLSYELPVVIEVVEDREKLLNFLKENRETFKNCYITFERVKVWE</sequence>
<protein>
    <recommendedName>
        <fullName>UPF0166 protein aq_448</fullName>
    </recommendedName>
</protein>
<dbReference type="EMBL" id="AE000657">
    <property type="protein sequence ID" value="AAC06717.1"/>
    <property type="molecule type" value="Genomic_DNA"/>
</dbReference>
<dbReference type="PIR" id="H70340">
    <property type="entry name" value="H70340"/>
</dbReference>
<dbReference type="RefSeq" id="NP_213316.1">
    <property type="nucleotide sequence ID" value="NC_000918.1"/>
</dbReference>
<dbReference type="RefSeq" id="WP_010880254.1">
    <property type="nucleotide sequence ID" value="NC_000918.1"/>
</dbReference>
<dbReference type="SMR" id="O66756"/>
<dbReference type="STRING" id="224324.aq_448"/>
<dbReference type="EnsemblBacteria" id="AAC06717">
    <property type="protein sequence ID" value="AAC06717"/>
    <property type="gene ID" value="aq_448"/>
</dbReference>
<dbReference type="KEGG" id="aae:aq_448"/>
<dbReference type="eggNOG" id="COG1993">
    <property type="taxonomic scope" value="Bacteria"/>
</dbReference>
<dbReference type="HOGENOM" id="CLU_146749_2_1_0"/>
<dbReference type="InParanoid" id="O66756"/>
<dbReference type="OrthoDB" id="15163at2"/>
<dbReference type="Proteomes" id="UP000000798">
    <property type="component" value="Chromosome"/>
</dbReference>
<dbReference type="Gene3D" id="3.30.70.120">
    <property type="match status" value="1"/>
</dbReference>
<dbReference type="InterPro" id="IPR011322">
    <property type="entry name" value="N-reg_PII-like_a/b"/>
</dbReference>
<dbReference type="InterPro" id="IPR015867">
    <property type="entry name" value="N-reg_PII/ATP_PRibTrfase_C"/>
</dbReference>
<dbReference type="InterPro" id="IPR003793">
    <property type="entry name" value="UPF0166"/>
</dbReference>
<dbReference type="PANTHER" id="PTHR35983">
    <property type="entry name" value="UPF0166 PROTEIN TM_0021"/>
    <property type="match status" value="1"/>
</dbReference>
<dbReference type="PANTHER" id="PTHR35983:SF1">
    <property type="entry name" value="UPF0166 PROTEIN TM_0021"/>
    <property type="match status" value="1"/>
</dbReference>
<dbReference type="Pfam" id="PF02641">
    <property type="entry name" value="DUF190"/>
    <property type="match status" value="1"/>
</dbReference>
<dbReference type="SUPFAM" id="SSF54913">
    <property type="entry name" value="GlnB-like"/>
    <property type="match status" value="1"/>
</dbReference>
<name>Y448_AQUAE</name>
<reference key="1">
    <citation type="journal article" date="1998" name="Nature">
        <title>The complete genome of the hyperthermophilic bacterium Aquifex aeolicus.</title>
        <authorList>
            <person name="Deckert G."/>
            <person name="Warren P.V."/>
            <person name="Gaasterland T."/>
            <person name="Young W.G."/>
            <person name="Lenox A.L."/>
            <person name="Graham D.E."/>
            <person name="Overbeek R."/>
            <person name="Snead M.A."/>
            <person name="Keller M."/>
            <person name="Aujay M."/>
            <person name="Huber R."/>
            <person name="Feldman R.A."/>
            <person name="Short J.M."/>
            <person name="Olsen G.J."/>
            <person name="Swanson R.V."/>
        </authorList>
    </citation>
    <scope>NUCLEOTIDE SEQUENCE [LARGE SCALE GENOMIC DNA]</scope>
    <source>
        <strain>VF5</strain>
    </source>
</reference>
<comment type="similarity">
    <text evidence="1">Belongs to the UPF0166 family.</text>
</comment>